<protein>
    <recommendedName>
        <fullName>Alcohol dehydrogenase 1</fullName>
        <ecNumber>1.1.1.1</ecNumber>
    </recommendedName>
</protein>
<feature type="chain" id="PRO_0000324677" description="Alcohol dehydrogenase 1">
    <location>
        <begin position="1" status="less than"/>
        <end position="31" status="greater than"/>
    </location>
</feature>
<feature type="binding site" evidence="2">
    <location>
        <position position="7"/>
    </location>
    <ligand>
        <name>Zn(2+)</name>
        <dbReference type="ChEBI" id="CHEBI:29105"/>
        <label>2</label>
    </ligand>
</feature>
<feature type="non-consecutive residues" evidence="4">
    <location>
        <begin position="11"/>
        <end position="12"/>
    </location>
</feature>
<feature type="non-terminal residue">
    <location>
        <position position="1"/>
    </location>
</feature>
<feature type="non-terminal residue">
    <location>
        <position position="31"/>
    </location>
</feature>
<dbReference type="EC" id="1.1.1.1"/>
<dbReference type="SMR" id="P85440"/>
<dbReference type="GO" id="GO:0005737">
    <property type="term" value="C:cytoplasm"/>
    <property type="evidence" value="ECO:0007669"/>
    <property type="project" value="UniProtKB-SubCell"/>
</dbReference>
<dbReference type="GO" id="GO:0004022">
    <property type="term" value="F:alcohol dehydrogenase (NAD+) activity"/>
    <property type="evidence" value="ECO:0007669"/>
    <property type="project" value="UniProtKB-EC"/>
</dbReference>
<dbReference type="GO" id="GO:0046872">
    <property type="term" value="F:metal ion binding"/>
    <property type="evidence" value="ECO:0007669"/>
    <property type="project" value="UniProtKB-KW"/>
</dbReference>
<proteinExistence type="evidence at protein level"/>
<keyword id="KW-0963">Cytoplasm</keyword>
<keyword id="KW-0903">Direct protein sequencing</keyword>
<keyword id="KW-0479">Metal-binding</keyword>
<keyword id="KW-0520">NAD</keyword>
<keyword id="KW-0560">Oxidoreductase</keyword>
<keyword id="KW-0862">Zinc</keyword>
<sequence>SEESNLCDLLRDYDKPAQEVIAEMTDGGVDR</sequence>
<accession>P85440</accession>
<name>ADH1_CATRO</name>
<reference evidence="4" key="1">
    <citation type="submission" date="2008-01" db="UniProtKB">
        <authorList>
            <person name="Varman P.A.M."/>
            <person name="Ranjitha Kumari B.D."/>
        </authorList>
    </citation>
    <scope>PROTEIN SEQUENCE</scope>
</reference>
<evidence type="ECO:0000250" key="1"/>
<evidence type="ECO:0000250" key="2">
    <source>
        <dbReference type="UniProtKB" id="P00329"/>
    </source>
</evidence>
<evidence type="ECO:0000255" key="3"/>
<evidence type="ECO:0000305" key="4"/>
<comment type="catalytic activity">
    <reaction>
        <text>a primary alcohol + NAD(+) = an aldehyde + NADH + H(+)</text>
        <dbReference type="Rhea" id="RHEA:10736"/>
        <dbReference type="ChEBI" id="CHEBI:15378"/>
        <dbReference type="ChEBI" id="CHEBI:15734"/>
        <dbReference type="ChEBI" id="CHEBI:17478"/>
        <dbReference type="ChEBI" id="CHEBI:57540"/>
        <dbReference type="ChEBI" id="CHEBI:57945"/>
        <dbReference type="EC" id="1.1.1.1"/>
    </reaction>
</comment>
<comment type="catalytic activity">
    <reaction>
        <text>a secondary alcohol + NAD(+) = a ketone + NADH + H(+)</text>
        <dbReference type="Rhea" id="RHEA:10740"/>
        <dbReference type="ChEBI" id="CHEBI:15378"/>
        <dbReference type="ChEBI" id="CHEBI:17087"/>
        <dbReference type="ChEBI" id="CHEBI:35681"/>
        <dbReference type="ChEBI" id="CHEBI:57540"/>
        <dbReference type="ChEBI" id="CHEBI:57945"/>
        <dbReference type="EC" id="1.1.1.1"/>
    </reaction>
</comment>
<comment type="cofactor">
    <cofactor evidence="1">
        <name>Zn(2+)</name>
        <dbReference type="ChEBI" id="CHEBI:29105"/>
    </cofactor>
    <text evidence="1">Binds 2 Zn(2+) ions per subunit.</text>
</comment>
<comment type="subunit">
    <text evidence="1">Homodimer.</text>
</comment>
<comment type="subcellular location">
    <subcellularLocation>
        <location evidence="1">Cytoplasm</location>
    </subcellularLocation>
</comment>
<comment type="similarity">
    <text evidence="3">Belongs to the zinc-containing alcohol dehydrogenase family. Class-P subfamily.</text>
</comment>
<organism>
    <name type="scientific">Catharanthus roseus</name>
    <name type="common">Madagascar periwinkle</name>
    <name type="synonym">Vinca rosea</name>
    <dbReference type="NCBI Taxonomy" id="4058"/>
    <lineage>
        <taxon>Eukaryota</taxon>
        <taxon>Viridiplantae</taxon>
        <taxon>Streptophyta</taxon>
        <taxon>Embryophyta</taxon>
        <taxon>Tracheophyta</taxon>
        <taxon>Spermatophyta</taxon>
        <taxon>Magnoliopsida</taxon>
        <taxon>eudicotyledons</taxon>
        <taxon>Gunneridae</taxon>
        <taxon>Pentapetalae</taxon>
        <taxon>asterids</taxon>
        <taxon>lamiids</taxon>
        <taxon>Gentianales</taxon>
        <taxon>Apocynaceae</taxon>
        <taxon>Rauvolfioideae</taxon>
        <taxon>Vinceae</taxon>
        <taxon>Catharanthinae</taxon>
        <taxon>Catharanthus</taxon>
    </lineage>
</organism>